<protein>
    <recommendedName>
        <fullName>Siderophore biosynthesis regulatory protein URBS1</fullName>
    </recommendedName>
</protein>
<organism>
    <name type="scientific">Mycosarcoma maydis</name>
    <name type="common">Corn smut fungus</name>
    <name type="synonym">Ustilago maydis</name>
    <dbReference type="NCBI Taxonomy" id="5270"/>
    <lineage>
        <taxon>Eukaryota</taxon>
        <taxon>Fungi</taxon>
        <taxon>Dikarya</taxon>
        <taxon>Basidiomycota</taxon>
        <taxon>Ustilaginomycotina</taxon>
        <taxon>Ustilaginomycetes</taxon>
        <taxon>Ustilaginales</taxon>
        <taxon>Ustilaginaceae</taxon>
        <taxon>Mycosarcoma</taxon>
    </lineage>
</organism>
<dbReference type="EMBL" id="M80547">
    <property type="protein sequence ID" value="AAB05617.1"/>
    <property type="status" value="ALT_FRAME"/>
    <property type="molecule type" value="Unassigned_DNA"/>
</dbReference>
<dbReference type="EMBL" id="CM003141">
    <property type="protein sequence ID" value="KIS71140.1"/>
    <property type="molecule type" value="Genomic_DNA"/>
</dbReference>
<dbReference type="PIR" id="S27473">
    <property type="entry name" value="S27473"/>
</dbReference>
<dbReference type="RefSeq" id="XP_011387018.1">
    <property type="nucleotide sequence ID" value="XM_011388716.1"/>
</dbReference>
<dbReference type="SMR" id="P40349"/>
<dbReference type="STRING" id="237631.P40349"/>
<dbReference type="EnsemblFungi" id="KIS71140">
    <property type="protein sequence ID" value="KIS71140"/>
    <property type="gene ID" value="UMAG_01050"/>
</dbReference>
<dbReference type="GeneID" id="23562174"/>
<dbReference type="KEGG" id="uma:UMAG_01050"/>
<dbReference type="VEuPathDB" id="FungiDB:UMAG_01050"/>
<dbReference type="eggNOG" id="KOG1601">
    <property type="taxonomic scope" value="Eukaryota"/>
</dbReference>
<dbReference type="HOGENOM" id="CLU_010093_0_0_1"/>
<dbReference type="InParanoid" id="P40349"/>
<dbReference type="OMA" id="CPAYNNN"/>
<dbReference type="OrthoDB" id="515401at2759"/>
<dbReference type="Proteomes" id="UP000000561">
    <property type="component" value="Chromosome 2"/>
</dbReference>
<dbReference type="GO" id="GO:0005634">
    <property type="term" value="C:nucleus"/>
    <property type="evidence" value="ECO:0000318"/>
    <property type="project" value="GO_Central"/>
</dbReference>
<dbReference type="GO" id="GO:0000981">
    <property type="term" value="F:DNA-binding transcription factor activity, RNA polymerase II-specific"/>
    <property type="evidence" value="ECO:0000318"/>
    <property type="project" value="GO_Central"/>
</dbReference>
<dbReference type="GO" id="GO:0000978">
    <property type="term" value="F:RNA polymerase II cis-regulatory region sequence-specific DNA binding"/>
    <property type="evidence" value="ECO:0000318"/>
    <property type="project" value="GO_Central"/>
</dbReference>
<dbReference type="GO" id="GO:0008270">
    <property type="term" value="F:zinc ion binding"/>
    <property type="evidence" value="ECO:0007669"/>
    <property type="project" value="UniProtKB-KW"/>
</dbReference>
<dbReference type="GO" id="GO:0000122">
    <property type="term" value="P:negative regulation of transcription by RNA polymerase II"/>
    <property type="evidence" value="ECO:0000318"/>
    <property type="project" value="GO_Central"/>
</dbReference>
<dbReference type="GO" id="GO:0045944">
    <property type="term" value="P:positive regulation of transcription by RNA polymerase II"/>
    <property type="evidence" value="ECO:0000318"/>
    <property type="project" value="GO_Central"/>
</dbReference>
<dbReference type="CDD" id="cd00202">
    <property type="entry name" value="ZnF_GATA"/>
    <property type="match status" value="2"/>
</dbReference>
<dbReference type="FunFam" id="3.30.50.10:FF:000007">
    <property type="entry name" value="Nitrogen regulatory AreA, N-terminal"/>
    <property type="match status" value="1"/>
</dbReference>
<dbReference type="Gene3D" id="3.30.50.10">
    <property type="entry name" value="Erythroid Transcription Factor GATA-1, subunit A"/>
    <property type="match status" value="2"/>
</dbReference>
<dbReference type="InterPro" id="IPR039355">
    <property type="entry name" value="Transcription_factor_GATA"/>
</dbReference>
<dbReference type="InterPro" id="IPR000679">
    <property type="entry name" value="Znf_GATA"/>
</dbReference>
<dbReference type="InterPro" id="IPR013088">
    <property type="entry name" value="Znf_NHR/GATA"/>
</dbReference>
<dbReference type="PANTHER" id="PTHR10071:SF335">
    <property type="entry name" value="IRON-SENSING TRANSCRIPTIONAL REPRESSOR-RELATED"/>
    <property type="match status" value="1"/>
</dbReference>
<dbReference type="PANTHER" id="PTHR10071">
    <property type="entry name" value="TRANSCRIPTION FACTOR GATA FAMILY MEMBER"/>
    <property type="match status" value="1"/>
</dbReference>
<dbReference type="Pfam" id="PF00320">
    <property type="entry name" value="GATA"/>
    <property type="match status" value="2"/>
</dbReference>
<dbReference type="PRINTS" id="PR00619">
    <property type="entry name" value="GATAZNFINGER"/>
</dbReference>
<dbReference type="SMART" id="SM00401">
    <property type="entry name" value="ZnF_GATA"/>
    <property type="match status" value="2"/>
</dbReference>
<dbReference type="SUPFAM" id="SSF57716">
    <property type="entry name" value="Glucocorticoid receptor-like (DNA-binding domain)"/>
    <property type="match status" value="2"/>
</dbReference>
<dbReference type="PROSITE" id="PS00344">
    <property type="entry name" value="GATA_ZN_FINGER_1"/>
    <property type="match status" value="2"/>
</dbReference>
<dbReference type="PROSITE" id="PS50114">
    <property type="entry name" value="GATA_ZN_FINGER_2"/>
    <property type="match status" value="2"/>
</dbReference>
<name>URB1_MYCMD</name>
<accession>P40349</accession>
<accession>A0A0D1E9S3</accession>
<accession>Q4PFR3</accession>
<gene>
    <name type="primary">URBS1</name>
    <name type="ORF">UMAG_01050</name>
</gene>
<evidence type="ECO:0000255" key="1">
    <source>
        <dbReference type="PROSITE-ProRule" id="PRU00094"/>
    </source>
</evidence>
<evidence type="ECO:0000256" key="2">
    <source>
        <dbReference type="SAM" id="MobiDB-lite"/>
    </source>
</evidence>
<evidence type="ECO:0000305" key="3"/>
<comment type="function">
    <text>Involved in the regulation of secreted ferrichrome-type siderophores. Acts directly or indirectly to repress the biosynthesis of siderophores.</text>
</comment>
<comment type="subcellular location">
    <subcellularLocation>
        <location evidence="3">Nucleus</location>
    </subcellularLocation>
</comment>
<comment type="sequence caution" evidence="3">
    <conflict type="frameshift">
        <sequence resource="EMBL-CDS" id="AAB05617"/>
    </conflict>
</comment>
<proteinExistence type="predicted"/>
<sequence>MALPPVKIASRPASPTPSHHHQQAAAASSSSSSSSSHHPPPRIAARPIAPADRSPERVSQHSRGASVHDADSLPPIRPRGSRPSSPSGHAADRAPSSHHNASSTATVPARSTARSLFRDPRTLHPAGRSQSPIAAFRNRSQSSERSRLGPSRSQPNSPLLQSSSLRHHSDATGVHLPPISSLSKELVSDHPDCFAHRRRTPTTSPRATARLHMGNTFRDSSPAASSGSPATMRHDHLAYRHEHSAEEHAKMQRYSDEHPRAMNPTSRASYEHESRGMPYRDSYSAPSRAIEASYHANGARPVHHADSSTNSPQYVPGDVYEHEGSGSPPAAHHAGMRCSNCGVTSTPLWRRAPDGSTICNACGLYIKSHSTHRSASNRLSGSDASPPTHEAKLAAAGPSCSREDDPKSGSCPGDGLCNGTGGTASCSGCPAYNNNLSHALKVSKRESQTSEDPPPARTAERAPPVAEEKMDDDKSVVGALRCTNCQTTTTPLWRRDEDGNNICNACGLYHKLHGTHRPIGMKKSVIKRRKRIPANATAQPTHILDVIPVQMNANGQPVIAPAAGRNAGDSTPKSTESRRASKKSSLTSEQAMREARDREAAMLLMEVGAGARSRNSAQEDDRIHQNGALATSTSFHHDFHSARAGADTARTSHPDDSRSSKRPRQSYPLAPREAYDERDVSAIASPPAYNETHAAGATRSQRSQRSPVDAPLTDRLGRSELHGESSHGTSNAPEHAARASASDGARLGSVVPHHHHHHHHHHANHASHAVHHGHHHHHHHPVTVSASSHGHAGQAPSGMTKLSEVERLRDELLFERRRIDEVLRRAEAILASARAGNFHVEAAGPSTSGLRNGHEASHESPPTGSAQGSPGADARGTRSGHDSIKQEAPDAAPRRSKAFSNSSSSSEKDELESPPPSAHQQLASQPLVAATGAQPASRRNSFEQRMASLPVMAAVPLKRSSPPSTVSNPADNRPLSIAPQPARKATAWGIDTRSTPAASPRSGEKRARADEMDEDDDHWNWDNLYGKAKLEKAGDWRGFARPVEDRRSQSKSNGVTRRESSSTPIAARLPVASSPSQAVSAPRT</sequence>
<keyword id="KW-0238">DNA-binding</keyword>
<keyword id="KW-0479">Metal-binding</keyword>
<keyword id="KW-0539">Nucleus</keyword>
<keyword id="KW-1185">Reference proteome</keyword>
<keyword id="KW-0677">Repeat</keyword>
<keyword id="KW-0678">Repressor</keyword>
<keyword id="KW-0804">Transcription</keyword>
<keyword id="KW-0805">Transcription regulation</keyword>
<keyword id="KW-0862">Zinc</keyword>
<keyword id="KW-0863">Zinc-finger</keyword>
<reference key="1">
    <citation type="journal article" date="1993" name="Mol. Cell. Biol.">
        <title>urbs1, a gene regulating siderophore biosynthesis in Ustilago maydis, encodes a protein similar to the erythroid transcription factor GATA-1.</title>
        <authorList>
            <person name="Voisard C.P."/>
            <person name="Wang J."/>
            <person name="McEvoy J.L."/>
            <person name="Xu P."/>
            <person name="Leong S.A."/>
        </authorList>
    </citation>
    <scope>NUCLEOTIDE SEQUENCE [GENOMIC DNA]</scope>
    <source>
        <strain>518</strain>
    </source>
</reference>
<reference key="2">
    <citation type="journal article" date="2006" name="Nature">
        <title>Insights from the genome of the biotrophic fungal plant pathogen Ustilago maydis.</title>
        <authorList>
            <person name="Kaemper J."/>
            <person name="Kahmann R."/>
            <person name="Boelker M."/>
            <person name="Ma L.-J."/>
            <person name="Brefort T."/>
            <person name="Saville B.J."/>
            <person name="Banuett F."/>
            <person name="Kronstad J.W."/>
            <person name="Gold S.E."/>
            <person name="Mueller O."/>
            <person name="Perlin M.H."/>
            <person name="Woesten H.A.B."/>
            <person name="de Vries R."/>
            <person name="Ruiz-Herrera J."/>
            <person name="Reynaga-Pena C.G."/>
            <person name="Snetselaar K."/>
            <person name="McCann M."/>
            <person name="Perez-Martin J."/>
            <person name="Feldbruegge M."/>
            <person name="Basse C.W."/>
            <person name="Steinberg G."/>
            <person name="Ibeas J.I."/>
            <person name="Holloman W."/>
            <person name="Guzman P."/>
            <person name="Farman M.L."/>
            <person name="Stajich J.E."/>
            <person name="Sentandreu R."/>
            <person name="Gonzalez-Prieto J.M."/>
            <person name="Kennell J.C."/>
            <person name="Molina L."/>
            <person name="Schirawski J."/>
            <person name="Mendoza-Mendoza A."/>
            <person name="Greilinger D."/>
            <person name="Muench K."/>
            <person name="Roessel N."/>
            <person name="Scherer M."/>
            <person name="Vranes M."/>
            <person name="Ladendorf O."/>
            <person name="Vincon V."/>
            <person name="Fuchs U."/>
            <person name="Sandrock B."/>
            <person name="Meng S."/>
            <person name="Ho E.C.H."/>
            <person name="Cahill M.J."/>
            <person name="Boyce K.J."/>
            <person name="Klose J."/>
            <person name="Klosterman S.J."/>
            <person name="Deelstra H.J."/>
            <person name="Ortiz-Castellanos L."/>
            <person name="Li W."/>
            <person name="Sanchez-Alonso P."/>
            <person name="Schreier P.H."/>
            <person name="Haeuser-Hahn I."/>
            <person name="Vaupel M."/>
            <person name="Koopmann E."/>
            <person name="Friedrich G."/>
            <person name="Voss H."/>
            <person name="Schlueter T."/>
            <person name="Margolis J."/>
            <person name="Platt D."/>
            <person name="Swimmer C."/>
            <person name="Gnirke A."/>
            <person name="Chen F."/>
            <person name="Vysotskaia V."/>
            <person name="Mannhaupt G."/>
            <person name="Gueldener U."/>
            <person name="Muensterkoetter M."/>
            <person name="Haase D."/>
            <person name="Oesterheld M."/>
            <person name="Mewes H.-W."/>
            <person name="Mauceli E.W."/>
            <person name="DeCaprio D."/>
            <person name="Wade C.M."/>
            <person name="Butler J."/>
            <person name="Young S.K."/>
            <person name="Jaffe D.B."/>
            <person name="Calvo S.E."/>
            <person name="Nusbaum C."/>
            <person name="Galagan J.E."/>
            <person name="Birren B.W."/>
        </authorList>
    </citation>
    <scope>NUCLEOTIDE SEQUENCE [LARGE SCALE GENOMIC DNA]</scope>
    <source>
        <strain>DSM 14603 / FGSC 9021 / UM521</strain>
    </source>
</reference>
<reference key="3">
    <citation type="submission" date="2014-09" db="EMBL/GenBank/DDBJ databases">
        <authorList>
            <person name="Gueldener U."/>
            <person name="Muensterkoetter M."/>
            <person name="Walter M.C."/>
            <person name="Mannhaupt G."/>
            <person name="Kahmann R."/>
        </authorList>
    </citation>
    <scope>GENOME REANNOTATION</scope>
    <source>
        <strain>DSM 14603 / FGSC 9021 / UM521</strain>
    </source>
</reference>
<feature type="chain" id="PRO_0000083481" description="Siderophore biosynthesis regulatory protein URBS1">
    <location>
        <begin position="1"/>
        <end position="1084"/>
    </location>
</feature>
<feature type="zinc finger region" description="GATA-type 1" evidence="1">
    <location>
        <begin position="338"/>
        <end position="362"/>
    </location>
</feature>
<feature type="zinc finger region" description="GATA-type 2" evidence="1">
    <location>
        <begin position="482"/>
        <end position="506"/>
    </location>
</feature>
<feature type="region of interest" description="Disordered" evidence="2">
    <location>
        <begin position="1"/>
        <end position="164"/>
    </location>
</feature>
<feature type="region of interest" description="Disordered" evidence="2">
    <location>
        <begin position="245"/>
        <end position="283"/>
    </location>
</feature>
<feature type="region of interest" description="Disordered" evidence="2">
    <location>
        <begin position="300"/>
        <end position="337"/>
    </location>
</feature>
<feature type="region of interest" description="Disordered" evidence="2">
    <location>
        <begin position="372"/>
        <end position="405"/>
    </location>
</feature>
<feature type="region of interest" description="Disordered" evidence="2">
    <location>
        <begin position="442"/>
        <end position="472"/>
    </location>
</feature>
<feature type="region of interest" description="Disordered" evidence="2">
    <location>
        <begin position="559"/>
        <end position="595"/>
    </location>
</feature>
<feature type="region of interest" description="Disordered" evidence="2">
    <location>
        <begin position="643"/>
        <end position="679"/>
    </location>
</feature>
<feature type="region of interest" description="Disordered" evidence="2">
    <location>
        <begin position="692"/>
        <end position="803"/>
    </location>
</feature>
<feature type="region of interest" description="Disordered" evidence="2">
    <location>
        <begin position="841"/>
        <end position="940"/>
    </location>
</feature>
<feature type="region of interest" description="Disordered" evidence="2">
    <location>
        <begin position="953"/>
        <end position="1019"/>
    </location>
</feature>
<feature type="region of interest" description="Disordered" evidence="2">
    <location>
        <begin position="1040"/>
        <end position="1084"/>
    </location>
</feature>
<feature type="compositionally biased region" description="Low complexity" evidence="2">
    <location>
        <begin position="23"/>
        <end position="51"/>
    </location>
</feature>
<feature type="compositionally biased region" description="Polar residues" evidence="2">
    <location>
        <begin position="97"/>
        <end position="106"/>
    </location>
</feature>
<feature type="compositionally biased region" description="Polar residues" evidence="2">
    <location>
        <begin position="128"/>
        <end position="141"/>
    </location>
</feature>
<feature type="compositionally biased region" description="Low complexity" evidence="2">
    <location>
        <begin position="150"/>
        <end position="164"/>
    </location>
</feature>
<feature type="compositionally biased region" description="Basic and acidic residues" evidence="2">
    <location>
        <begin position="245"/>
        <end position="260"/>
    </location>
</feature>
<feature type="compositionally biased region" description="Polar residues" evidence="2">
    <location>
        <begin position="373"/>
        <end position="385"/>
    </location>
</feature>
<feature type="compositionally biased region" description="Basic and acidic residues" evidence="2">
    <location>
        <begin position="650"/>
        <end position="659"/>
    </location>
</feature>
<feature type="compositionally biased region" description="Basic and acidic residues" evidence="2">
    <location>
        <begin position="715"/>
        <end position="725"/>
    </location>
</feature>
<feature type="compositionally biased region" description="Basic residues" evidence="2">
    <location>
        <begin position="752"/>
        <end position="781"/>
    </location>
</feature>
<feature type="compositionally biased region" description="Basic and acidic residues" evidence="2">
    <location>
        <begin position="875"/>
        <end position="888"/>
    </location>
</feature>
<feature type="compositionally biased region" description="Polar residues" evidence="2">
    <location>
        <begin position="961"/>
        <end position="970"/>
    </location>
</feature>
<feature type="compositionally biased region" description="Low complexity" evidence="2">
    <location>
        <begin position="1070"/>
        <end position="1084"/>
    </location>
</feature>